<dbReference type="EMBL" id="AY486339">
    <property type="protein sequence ID" value="AAS57910.1"/>
    <property type="molecule type" value="Genomic_DNA"/>
</dbReference>
<dbReference type="RefSeq" id="NP_001160154.1">
    <property type="nucleotide sequence ID" value="NM_001166682.1"/>
</dbReference>
<dbReference type="SMR" id="Q675B8"/>
<dbReference type="FunCoup" id="Q675B8">
    <property type="interactions" value="80"/>
</dbReference>
<dbReference type="STRING" id="10116.ENSRNOP00000063238"/>
<dbReference type="GlyCosmos" id="Q675B8">
    <property type="glycosylation" value="1 site, No reported glycans"/>
</dbReference>
<dbReference type="GlyGen" id="Q675B8">
    <property type="glycosylation" value="1 site"/>
</dbReference>
<dbReference type="PaxDb" id="10116-ENSRNOP00000063238"/>
<dbReference type="GeneID" id="100310880"/>
<dbReference type="KEGG" id="rno:100310880"/>
<dbReference type="UCSC" id="RGD:2314258">
    <property type="organism name" value="rat"/>
</dbReference>
<dbReference type="AGR" id="RGD:2314258"/>
<dbReference type="CTD" id="353166"/>
<dbReference type="RGD" id="2314258">
    <property type="gene designation" value="Tas2r117"/>
</dbReference>
<dbReference type="eggNOG" id="ENOG502SKRK">
    <property type="taxonomic scope" value="Eukaryota"/>
</dbReference>
<dbReference type="HOGENOM" id="CLU_072337_3_0_1"/>
<dbReference type="InParanoid" id="Q675B8"/>
<dbReference type="OrthoDB" id="8876749at2759"/>
<dbReference type="PhylomeDB" id="Q675B8"/>
<dbReference type="TreeFam" id="TF335891"/>
<dbReference type="PRO" id="PR:Q675B8"/>
<dbReference type="Proteomes" id="UP000002494">
    <property type="component" value="Chromosome 4"/>
</dbReference>
<dbReference type="GO" id="GO:0016020">
    <property type="term" value="C:membrane"/>
    <property type="evidence" value="ECO:0000318"/>
    <property type="project" value="GO_Central"/>
</dbReference>
<dbReference type="GO" id="GO:0033038">
    <property type="term" value="F:bitter taste receptor activity"/>
    <property type="evidence" value="ECO:0000318"/>
    <property type="project" value="GO_Central"/>
</dbReference>
<dbReference type="GO" id="GO:0004930">
    <property type="term" value="F:G protein-coupled receptor activity"/>
    <property type="evidence" value="ECO:0007669"/>
    <property type="project" value="UniProtKB-KW"/>
</dbReference>
<dbReference type="GO" id="GO:0001580">
    <property type="term" value="P:detection of chemical stimulus involved in sensory perception of bitter taste"/>
    <property type="evidence" value="ECO:0000318"/>
    <property type="project" value="GO_Central"/>
</dbReference>
<dbReference type="CDD" id="cd15019">
    <property type="entry name" value="7tm_TAS2R14-like"/>
    <property type="match status" value="1"/>
</dbReference>
<dbReference type="FunFam" id="1.20.1070.10:FF:000042">
    <property type="entry name" value="Taste receptor type 2 member 7"/>
    <property type="match status" value="1"/>
</dbReference>
<dbReference type="Gene3D" id="1.20.1070.10">
    <property type="entry name" value="Rhodopsin 7-helix transmembrane proteins"/>
    <property type="match status" value="1"/>
</dbReference>
<dbReference type="InterPro" id="IPR007960">
    <property type="entry name" value="TAS2R"/>
</dbReference>
<dbReference type="PANTHER" id="PTHR11394">
    <property type="entry name" value="TASTE RECEPTOR TYPE 2"/>
    <property type="match status" value="1"/>
</dbReference>
<dbReference type="PANTHER" id="PTHR11394:SF61">
    <property type="entry name" value="TASTE RECEPTOR TYPE 2 MEMBER 117"/>
    <property type="match status" value="1"/>
</dbReference>
<dbReference type="Pfam" id="PF05296">
    <property type="entry name" value="TAS2R"/>
    <property type="match status" value="1"/>
</dbReference>
<dbReference type="SUPFAM" id="SSF81321">
    <property type="entry name" value="Family A G protein-coupled receptor-like"/>
    <property type="match status" value="1"/>
</dbReference>
<comment type="function">
    <text evidence="3">Putative taste receptor which may play a role in the perception of bitterness.</text>
</comment>
<comment type="subcellular location">
    <subcellularLocation>
        <location evidence="3">Membrane</location>
        <topology evidence="3">Multi-pass membrane protein</topology>
    </subcellularLocation>
</comment>
<comment type="miscellaneous">
    <text evidence="3">Several bitter taste receptors are expressed in a single taste receptor cell.</text>
</comment>
<comment type="similarity">
    <text evidence="2">Belongs to the G-protein coupled receptor T2R family.</text>
</comment>
<name>TR117_RAT</name>
<feature type="chain" id="PRO_0000248478" description="Taste receptor type 2 member 117">
    <location>
        <begin position="1"/>
        <end position="318"/>
    </location>
</feature>
<feature type="topological domain" description="Extracellular" evidence="2">
    <location>
        <begin position="1"/>
        <end position="16"/>
    </location>
</feature>
<feature type="transmembrane region" description="Helical; Name=1" evidence="2">
    <location>
        <begin position="17"/>
        <end position="37"/>
    </location>
</feature>
<feature type="topological domain" description="Cytoplasmic" evidence="2">
    <location>
        <begin position="38"/>
        <end position="53"/>
    </location>
</feature>
<feature type="transmembrane region" description="Helical; Name=2" evidence="2">
    <location>
        <begin position="54"/>
        <end position="74"/>
    </location>
</feature>
<feature type="topological domain" description="Extracellular" evidence="2">
    <location>
        <begin position="75"/>
        <end position="93"/>
    </location>
</feature>
<feature type="transmembrane region" description="Helical; Name=3" evidence="2">
    <location>
        <begin position="94"/>
        <end position="114"/>
    </location>
</feature>
<feature type="topological domain" description="Cytoplasmic" evidence="2">
    <location>
        <begin position="115"/>
        <end position="134"/>
    </location>
</feature>
<feature type="transmembrane region" description="Helical; Name=4" evidence="2">
    <location>
        <begin position="135"/>
        <end position="155"/>
    </location>
</feature>
<feature type="topological domain" description="Extracellular" evidence="2">
    <location>
        <begin position="156"/>
        <end position="189"/>
    </location>
</feature>
<feature type="transmembrane region" description="Helical; Name=5" evidence="2">
    <location>
        <begin position="190"/>
        <end position="210"/>
    </location>
</feature>
<feature type="topological domain" description="Cytoplasmic" evidence="2">
    <location>
        <begin position="211"/>
        <end position="238"/>
    </location>
</feature>
<feature type="transmembrane region" description="Helical; Name=6" evidence="2">
    <location>
        <begin position="239"/>
        <end position="259"/>
    </location>
</feature>
<feature type="topological domain" description="Extracellular" evidence="2">
    <location>
        <begin position="260"/>
        <end position="268"/>
    </location>
</feature>
<feature type="transmembrane region" description="Helical; Name=7" evidence="2">
    <location>
        <begin position="269"/>
        <end position="289"/>
    </location>
</feature>
<feature type="topological domain" description="Cytoplasmic" evidence="2">
    <location>
        <begin position="290"/>
        <end position="318"/>
    </location>
</feature>
<feature type="glycosylation site" description="N-linked (GlcNAc...) asparagine" evidence="2">
    <location>
        <position position="168"/>
    </location>
</feature>
<keyword id="KW-0297">G-protein coupled receptor</keyword>
<keyword id="KW-0325">Glycoprotein</keyword>
<keyword id="KW-0472">Membrane</keyword>
<keyword id="KW-0675">Receptor</keyword>
<keyword id="KW-1185">Reference proteome</keyword>
<keyword id="KW-0716">Sensory transduction</keyword>
<keyword id="KW-0919">Taste</keyword>
<keyword id="KW-0807">Transducer</keyword>
<keyword id="KW-0812">Transmembrane</keyword>
<keyword id="KW-1133">Transmembrane helix</keyword>
<organism>
    <name type="scientific">Rattus norvegicus</name>
    <name type="common">Rat</name>
    <dbReference type="NCBI Taxonomy" id="10116"/>
    <lineage>
        <taxon>Eukaryota</taxon>
        <taxon>Metazoa</taxon>
        <taxon>Chordata</taxon>
        <taxon>Craniata</taxon>
        <taxon>Vertebrata</taxon>
        <taxon>Euteleostomi</taxon>
        <taxon>Mammalia</taxon>
        <taxon>Eutheria</taxon>
        <taxon>Euarchontoglires</taxon>
        <taxon>Glires</taxon>
        <taxon>Rodentia</taxon>
        <taxon>Myomorpha</taxon>
        <taxon>Muroidea</taxon>
        <taxon>Muridae</taxon>
        <taxon>Murinae</taxon>
        <taxon>Rattus</taxon>
    </lineage>
</organism>
<protein>
    <recommendedName>
        <fullName>Taste receptor type 2 member 117</fullName>
        <shortName>T2R117</shortName>
    </recommendedName>
    <alternativeName>
        <fullName>Taste receptor type 2 member 39</fullName>
        <shortName>T2R39</shortName>
    </alternativeName>
</protein>
<evidence type="ECO:0000250" key="1">
    <source>
        <dbReference type="UniProtKB" id="Q7M715"/>
    </source>
</evidence>
<evidence type="ECO:0000255" key="2"/>
<evidence type="ECO:0000305" key="3"/>
<evidence type="ECO:0000312" key="4">
    <source>
        <dbReference type="EMBL" id="AAS57910.1"/>
    </source>
</evidence>
<gene>
    <name evidence="1" type="primary">Tas2r117</name>
    <name type="synonym">T2r39</name>
</gene>
<sequence length="318" mass="37090">MQHNLKTIFVISHSTLTIILFTELVTGIIGNGFMALVHCMDWLRRKKISLVNQILTALAISRIFQLCLLFISLVISFSYPDLTTTSLIKVTCNLWIIVNHFNIWLATCLGIFYFLKISNFSNSLFLYLKWRVEKVVLVTLLVSLVLLTLNSLLINLEINICINEYQRNITYSFNSYYHANCHRQMLSLHIIFLSVPFVLSLSTFLLLIFSLGTHHKKMQQHVQGRRDASTMAHFKALQTVIAFLLLYSIFILSVLVQIWKYELLKKNLFILFCQVAYVAFPSFHSYILILGDMKMRQACLSVLWWQKFRKNYVEPLDL</sequence>
<proteinExistence type="inferred from homology"/>
<accession>Q675B8</accession>
<reference evidence="4" key="1">
    <citation type="submission" date="2003-11" db="EMBL/GenBank/DDBJ databases">
        <title>Identification of new putative rat taste receptors belonging to the T2R family.</title>
        <authorList>
            <person name="Conte C."/>
            <person name="Ebeling M."/>
            <person name="Marcuz A."/>
            <person name="Andres-Barquin P.J."/>
        </authorList>
    </citation>
    <scope>NUCLEOTIDE SEQUENCE [GENOMIC DNA]</scope>
    <source>
        <strain evidence="4">Sprague-Dawley</strain>
    </source>
</reference>